<protein>
    <recommendedName>
        <fullName evidence="1">Acetylglutamate kinase</fullName>
        <ecNumber evidence="1">2.7.2.8</ecNumber>
    </recommendedName>
    <alternativeName>
        <fullName evidence="1">N-acetyl-L-glutamate 5-phosphotransferase</fullName>
    </alternativeName>
    <alternativeName>
        <fullName evidence="1">NAG kinase</fullName>
        <shortName evidence="1">NAGK</shortName>
    </alternativeName>
</protein>
<keyword id="KW-0028">Amino-acid biosynthesis</keyword>
<keyword id="KW-0055">Arginine biosynthesis</keyword>
<keyword id="KW-0067">ATP-binding</keyword>
<keyword id="KW-0963">Cytoplasm</keyword>
<keyword id="KW-0418">Kinase</keyword>
<keyword id="KW-0547">Nucleotide-binding</keyword>
<keyword id="KW-0808">Transferase</keyword>
<organism>
    <name type="scientific">Desulfitobacterium hafniense (strain DSM 10664 / DCB-2)</name>
    <dbReference type="NCBI Taxonomy" id="272564"/>
    <lineage>
        <taxon>Bacteria</taxon>
        <taxon>Bacillati</taxon>
        <taxon>Bacillota</taxon>
        <taxon>Clostridia</taxon>
        <taxon>Eubacteriales</taxon>
        <taxon>Desulfitobacteriaceae</taxon>
        <taxon>Desulfitobacterium</taxon>
    </lineage>
</organism>
<comment type="function">
    <text evidence="1">Catalyzes the ATP-dependent phosphorylation of N-acetyl-L-glutamate.</text>
</comment>
<comment type="catalytic activity">
    <reaction evidence="1">
        <text>N-acetyl-L-glutamate + ATP = N-acetyl-L-glutamyl 5-phosphate + ADP</text>
        <dbReference type="Rhea" id="RHEA:14629"/>
        <dbReference type="ChEBI" id="CHEBI:30616"/>
        <dbReference type="ChEBI" id="CHEBI:44337"/>
        <dbReference type="ChEBI" id="CHEBI:57936"/>
        <dbReference type="ChEBI" id="CHEBI:456216"/>
        <dbReference type="EC" id="2.7.2.8"/>
    </reaction>
</comment>
<comment type="pathway">
    <text evidence="1">Amino-acid biosynthesis; L-arginine biosynthesis; N(2)-acetyl-L-ornithine from L-glutamate: step 2/4.</text>
</comment>
<comment type="subcellular location">
    <subcellularLocation>
        <location evidence="1">Cytoplasm</location>
    </subcellularLocation>
</comment>
<comment type="similarity">
    <text evidence="1">Belongs to the acetylglutamate kinase family. ArgB subfamily.</text>
</comment>
<proteinExistence type="inferred from homology"/>
<name>ARGB_DESHD</name>
<feature type="chain" id="PRO_1000118349" description="Acetylglutamate kinase">
    <location>
        <begin position="1"/>
        <end position="298"/>
    </location>
</feature>
<feature type="binding site" evidence="1">
    <location>
        <begin position="67"/>
        <end position="68"/>
    </location>
    <ligand>
        <name>substrate</name>
    </ligand>
</feature>
<feature type="binding site" evidence="1">
    <location>
        <position position="89"/>
    </location>
    <ligand>
        <name>substrate</name>
    </ligand>
</feature>
<feature type="binding site" evidence="1">
    <location>
        <position position="193"/>
    </location>
    <ligand>
        <name>substrate</name>
    </ligand>
</feature>
<feature type="site" description="Transition state stabilizer" evidence="1">
    <location>
        <position position="32"/>
    </location>
</feature>
<feature type="site" description="Transition state stabilizer" evidence="1">
    <location>
        <position position="256"/>
    </location>
</feature>
<evidence type="ECO:0000255" key="1">
    <source>
        <dbReference type="HAMAP-Rule" id="MF_00082"/>
    </source>
</evidence>
<gene>
    <name evidence="1" type="primary">argB</name>
    <name type="ordered locus">Dhaf_0771</name>
</gene>
<sequence>MTPLDKGLDKARVLIEALPYIQKFAGKTVVIKYGGHAMLEQDLKEKVMLDILLLHSVGIRPVVVHGGGPEINSMLTRVGKESHFVRGLRVTDKETMEIASMVLVGKLNTEIISLLNRFGGRAVGLSGKDAQLLQAVKKPMQFQNSQGELEDVDLGFVGEIEQIRPEIVTSLVEQGYIPVISPVAGGEDGESYNINADTAAGEIAKALKADKFLLLTDVPGVLRDVEDKDSLLSVIKEDEISGLIDLGVISGGMIPKVECARAALQGGVGSVHILDGRIPHAILLELFTDGGIGTMFNA</sequence>
<accession>B8FWU9</accession>
<dbReference type="EC" id="2.7.2.8" evidence="1"/>
<dbReference type="EMBL" id="CP001336">
    <property type="protein sequence ID" value="ACL18835.1"/>
    <property type="molecule type" value="Genomic_DNA"/>
</dbReference>
<dbReference type="RefSeq" id="WP_015943021.1">
    <property type="nucleotide sequence ID" value="NC_011830.1"/>
</dbReference>
<dbReference type="SMR" id="B8FWU9"/>
<dbReference type="KEGG" id="dhd:Dhaf_0771"/>
<dbReference type="HOGENOM" id="CLU_053680_0_0_9"/>
<dbReference type="UniPathway" id="UPA00068">
    <property type="reaction ID" value="UER00107"/>
</dbReference>
<dbReference type="Proteomes" id="UP000007726">
    <property type="component" value="Chromosome"/>
</dbReference>
<dbReference type="GO" id="GO:0005737">
    <property type="term" value="C:cytoplasm"/>
    <property type="evidence" value="ECO:0007669"/>
    <property type="project" value="UniProtKB-SubCell"/>
</dbReference>
<dbReference type="GO" id="GO:0003991">
    <property type="term" value="F:acetylglutamate kinase activity"/>
    <property type="evidence" value="ECO:0007669"/>
    <property type="project" value="UniProtKB-UniRule"/>
</dbReference>
<dbReference type="GO" id="GO:0005524">
    <property type="term" value="F:ATP binding"/>
    <property type="evidence" value="ECO:0007669"/>
    <property type="project" value="UniProtKB-UniRule"/>
</dbReference>
<dbReference type="GO" id="GO:0042450">
    <property type="term" value="P:arginine biosynthetic process via ornithine"/>
    <property type="evidence" value="ECO:0007669"/>
    <property type="project" value="UniProtKB-UniRule"/>
</dbReference>
<dbReference type="GO" id="GO:0006526">
    <property type="term" value="P:L-arginine biosynthetic process"/>
    <property type="evidence" value="ECO:0007669"/>
    <property type="project" value="UniProtKB-UniPathway"/>
</dbReference>
<dbReference type="CDD" id="cd04250">
    <property type="entry name" value="AAK_NAGK-C"/>
    <property type="match status" value="1"/>
</dbReference>
<dbReference type="FunFam" id="3.40.1160.10:FF:000004">
    <property type="entry name" value="Acetylglutamate kinase"/>
    <property type="match status" value="1"/>
</dbReference>
<dbReference type="Gene3D" id="3.40.1160.10">
    <property type="entry name" value="Acetylglutamate kinase-like"/>
    <property type="match status" value="1"/>
</dbReference>
<dbReference type="HAMAP" id="MF_00082">
    <property type="entry name" value="ArgB"/>
    <property type="match status" value="1"/>
</dbReference>
<dbReference type="InterPro" id="IPR036393">
    <property type="entry name" value="AceGlu_kinase-like_sf"/>
</dbReference>
<dbReference type="InterPro" id="IPR004662">
    <property type="entry name" value="AcgluKinase_fam"/>
</dbReference>
<dbReference type="InterPro" id="IPR037528">
    <property type="entry name" value="ArgB"/>
</dbReference>
<dbReference type="InterPro" id="IPR001048">
    <property type="entry name" value="Asp/Glu/Uridylate_kinase"/>
</dbReference>
<dbReference type="InterPro" id="IPR001057">
    <property type="entry name" value="Glu/AcGlu_kinase"/>
</dbReference>
<dbReference type="InterPro" id="IPR041727">
    <property type="entry name" value="NAGK-C"/>
</dbReference>
<dbReference type="NCBIfam" id="TIGR00761">
    <property type="entry name" value="argB"/>
    <property type="match status" value="1"/>
</dbReference>
<dbReference type="PANTHER" id="PTHR23342">
    <property type="entry name" value="N-ACETYLGLUTAMATE SYNTHASE"/>
    <property type="match status" value="1"/>
</dbReference>
<dbReference type="PANTHER" id="PTHR23342:SF0">
    <property type="entry name" value="N-ACETYLGLUTAMATE SYNTHASE, MITOCHONDRIAL"/>
    <property type="match status" value="1"/>
</dbReference>
<dbReference type="Pfam" id="PF00696">
    <property type="entry name" value="AA_kinase"/>
    <property type="match status" value="1"/>
</dbReference>
<dbReference type="PIRSF" id="PIRSF000728">
    <property type="entry name" value="NAGK"/>
    <property type="match status" value="1"/>
</dbReference>
<dbReference type="PRINTS" id="PR00474">
    <property type="entry name" value="GLU5KINASE"/>
</dbReference>
<dbReference type="SUPFAM" id="SSF53633">
    <property type="entry name" value="Carbamate kinase-like"/>
    <property type="match status" value="1"/>
</dbReference>
<reference key="1">
    <citation type="journal article" date="2012" name="BMC Microbiol.">
        <title>Genome sequence of Desulfitobacterium hafniense DCB-2, a Gram-positive anaerobe capable of dehalogenation and metal reduction.</title>
        <authorList>
            <person name="Kim S.H."/>
            <person name="Harzman C."/>
            <person name="Davis J.K."/>
            <person name="Hutcheson R."/>
            <person name="Broderick J.B."/>
            <person name="Marsh T.L."/>
            <person name="Tiedje J.M."/>
        </authorList>
    </citation>
    <scope>NUCLEOTIDE SEQUENCE [LARGE SCALE GENOMIC DNA]</scope>
    <source>
        <strain>DSM 10664 / DCB-2</strain>
    </source>
</reference>